<proteinExistence type="evidence at protein level"/>
<name>ZFP62_HUMAN</name>
<dbReference type="EMBL" id="AK091550">
    <property type="protein sequence ID" value="BAC03691.1"/>
    <property type="status" value="ALT_INIT"/>
    <property type="molecule type" value="mRNA"/>
</dbReference>
<dbReference type="EMBL" id="AK295714">
    <property type="protein sequence ID" value="BAG58558.1"/>
    <property type="status" value="ALT_SEQ"/>
    <property type="molecule type" value="mRNA"/>
</dbReference>
<dbReference type="EMBL" id="AK303450">
    <property type="protein sequence ID" value="BAG64495.1"/>
    <property type="molecule type" value="mRNA"/>
</dbReference>
<dbReference type="EMBL" id="DA323041">
    <property type="status" value="NOT_ANNOTATED_CDS"/>
    <property type="molecule type" value="mRNA"/>
</dbReference>
<dbReference type="EMBL" id="AC022413">
    <property type="status" value="NOT_ANNOTATED_CDS"/>
    <property type="molecule type" value="Genomic_DNA"/>
</dbReference>
<dbReference type="EMBL" id="AL832408">
    <property type="protein sequence ID" value="CAI46133.1"/>
    <property type="status" value="ALT_INIT"/>
    <property type="molecule type" value="Transcribed_RNA"/>
</dbReference>
<dbReference type="EMBL" id="BC140761">
    <property type="protein sequence ID" value="AAI40762.1"/>
    <property type="status" value="ALT_INIT"/>
    <property type="molecule type" value="mRNA"/>
</dbReference>
<dbReference type="EMBL" id="BC171780">
    <property type="protein sequence ID" value="AAI71780.1"/>
    <property type="molecule type" value="mRNA"/>
</dbReference>
<dbReference type="CCDS" id="CCDS47357.2">
    <molecule id="Q8NB50-3"/>
</dbReference>
<dbReference type="CCDS" id="CCDS54955.1">
    <molecule id="Q8NB50-1"/>
</dbReference>
<dbReference type="RefSeq" id="NP_001166109.1">
    <molecule id="Q8NB50-1"/>
    <property type="nucleotide sequence ID" value="NM_001172638.2"/>
</dbReference>
<dbReference type="RefSeq" id="NP_001364868.1">
    <molecule id="Q8NB50-3"/>
    <property type="nucleotide sequence ID" value="NM_001377939.1"/>
</dbReference>
<dbReference type="RefSeq" id="NP_001364869.1">
    <molecule id="Q8NB50-3"/>
    <property type="nucleotide sequence ID" value="NM_001377940.1"/>
</dbReference>
<dbReference type="RefSeq" id="NP_001364870.1">
    <molecule id="Q8NB50-3"/>
    <property type="nucleotide sequence ID" value="NM_001377941.1"/>
</dbReference>
<dbReference type="RefSeq" id="NP_001364871.1">
    <molecule id="Q8NB50-3"/>
    <property type="nucleotide sequence ID" value="NM_001377942.1"/>
</dbReference>
<dbReference type="RefSeq" id="NP_001364872.1">
    <molecule id="Q8NB50-1"/>
    <property type="nucleotide sequence ID" value="NM_001377943.1"/>
</dbReference>
<dbReference type="RefSeq" id="NP_689496.4">
    <molecule id="Q8NB50-3"/>
    <property type="nucleotide sequence ID" value="NM_152283.5"/>
</dbReference>
<dbReference type="RefSeq" id="XP_016865199.1">
    <property type="nucleotide sequence ID" value="XM_017009710.1"/>
</dbReference>
<dbReference type="RefSeq" id="XP_016865200.1">
    <property type="nucleotide sequence ID" value="XM_017009711.1"/>
</dbReference>
<dbReference type="RefSeq" id="XP_016865201.1">
    <property type="nucleotide sequence ID" value="XM_017009712.1"/>
</dbReference>
<dbReference type="RefSeq" id="XP_016865202.1">
    <property type="nucleotide sequence ID" value="XM_017009713.1"/>
</dbReference>
<dbReference type="RefSeq" id="XP_016865203.1">
    <property type="nucleotide sequence ID" value="XM_017009714.1"/>
</dbReference>
<dbReference type="RefSeq" id="XP_016865204.1">
    <property type="nucleotide sequence ID" value="XM_017009715.1"/>
</dbReference>
<dbReference type="RefSeq" id="XP_016865206.1">
    <property type="nucleotide sequence ID" value="XM_017009717.1"/>
</dbReference>
<dbReference type="RefSeq" id="XP_047273456.1">
    <molecule id="Q8NB50-3"/>
    <property type="nucleotide sequence ID" value="XM_047417500.1"/>
</dbReference>
<dbReference type="RefSeq" id="XP_054209078.1">
    <molecule id="Q8NB50-3"/>
    <property type="nucleotide sequence ID" value="XM_054353103.1"/>
</dbReference>
<dbReference type="SMR" id="Q8NB50"/>
<dbReference type="BioGRID" id="569091">
    <property type="interactions" value="69"/>
</dbReference>
<dbReference type="FunCoup" id="Q8NB50">
    <property type="interactions" value="540"/>
</dbReference>
<dbReference type="IntAct" id="Q8NB50">
    <property type="interactions" value="69"/>
</dbReference>
<dbReference type="STRING" id="9606.ENSP00000423820"/>
<dbReference type="GlyGen" id="Q8NB50">
    <property type="glycosylation" value="1 site, 1 O-linked glycan (1 site)"/>
</dbReference>
<dbReference type="iPTMnet" id="Q8NB50"/>
<dbReference type="PhosphoSitePlus" id="Q8NB50"/>
<dbReference type="BioMuta" id="ZFP62"/>
<dbReference type="DMDM" id="327478553"/>
<dbReference type="jPOST" id="Q8NB50"/>
<dbReference type="MassIVE" id="Q8NB50"/>
<dbReference type="PaxDb" id="9606-ENSP00000423820"/>
<dbReference type="PeptideAtlas" id="Q8NB50"/>
<dbReference type="ProteomicsDB" id="72735">
    <molecule id="Q8NB50-1"/>
</dbReference>
<dbReference type="ProteomicsDB" id="72736">
    <molecule id="Q8NB50-2"/>
</dbReference>
<dbReference type="Pumba" id="Q8NB50"/>
<dbReference type="Antibodypedia" id="53012">
    <property type="antibodies" value="29 antibodies from 9 providers"/>
</dbReference>
<dbReference type="DNASU" id="643836"/>
<dbReference type="Ensembl" id="ENST00000502412.2">
    <molecule id="Q8NB50-1"/>
    <property type="protein sequence ID" value="ENSP00000423820.1"/>
    <property type="gene ID" value="ENSG00000196670.14"/>
</dbReference>
<dbReference type="Ensembl" id="ENST00000512132.5">
    <molecule id="Q8NB50-3"/>
    <property type="protein sequence ID" value="ENSP00000426193.1"/>
    <property type="gene ID" value="ENSG00000196670.14"/>
</dbReference>
<dbReference type="GeneID" id="643836"/>
<dbReference type="KEGG" id="hsa:643836"/>
<dbReference type="MANE-Select" id="ENST00000502412.2">
    <property type="protein sequence ID" value="ENSP00000423820.1"/>
    <property type="RefSeq nucleotide sequence ID" value="NM_001172638.2"/>
    <property type="RefSeq protein sequence ID" value="NP_001166109.1"/>
</dbReference>
<dbReference type="UCSC" id="uc011dhe.3">
    <molecule id="Q8NB50-1"/>
    <property type="organism name" value="human"/>
</dbReference>
<dbReference type="AGR" id="HGNC:23241"/>
<dbReference type="CTD" id="643836"/>
<dbReference type="GeneCards" id="ZFP62"/>
<dbReference type="HGNC" id="HGNC:23241">
    <property type="gene designation" value="ZFP62"/>
</dbReference>
<dbReference type="HPA" id="ENSG00000196670">
    <property type="expression patterns" value="Low tissue specificity"/>
</dbReference>
<dbReference type="MIM" id="610281">
    <property type="type" value="gene"/>
</dbReference>
<dbReference type="neXtProt" id="NX_Q8NB50"/>
<dbReference type="OpenTargets" id="ENSG00000196670"/>
<dbReference type="PharmGKB" id="PA134969387"/>
<dbReference type="VEuPathDB" id="HostDB:ENSG00000196670"/>
<dbReference type="eggNOG" id="KOG1721">
    <property type="taxonomic scope" value="Eukaryota"/>
</dbReference>
<dbReference type="GeneTree" id="ENSGT00940000162750"/>
<dbReference type="HOGENOM" id="CLU_002678_17_3_1"/>
<dbReference type="InParanoid" id="Q8NB50"/>
<dbReference type="OMA" id="GNTESKW"/>
<dbReference type="OrthoDB" id="9411774at2759"/>
<dbReference type="PAN-GO" id="Q8NB50">
    <property type="GO annotations" value="4 GO annotations based on evolutionary models"/>
</dbReference>
<dbReference type="PhylomeDB" id="Q8NB50"/>
<dbReference type="TreeFam" id="TF343410"/>
<dbReference type="PathwayCommons" id="Q8NB50"/>
<dbReference type="SignaLink" id="Q8NB50"/>
<dbReference type="BioGRID-ORCS" id="643836">
    <property type="hits" value="7 hits in 1181 CRISPR screens"/>
</dbReference>
<dbReference type="ChiTaRS" id="ZFP62">
    <property type="organism name" value="human"/>
</dbReference>
<dbReference type="GenomeRNAi" id="643836"/>
<dbReference type="Pharos" id="Q8NB50">
    <property type="development level" value="Tdark"/>
</dbReference>
<dbReference type="PRO" id="PR:Q8NB50"/>
<dbReference type="Proteomes" id="UP000005640">
    <property type="component" value="Chromosome 5"/>
</dbReference>
<dbReference type="RNAct" id="Q8NB50">
    <property type="molecule type" value="protein"/>
</dbReference>
<dbReference type="Bgee" id="ENSG00000196670">
    <property type="expression patterns" value="Expressed in ganglionic eminence and 188 other cell types or tissues"/>
</dbReference>
<dbReference type="ExpressionAtlas" id="Q8NB50">
    <property type="expression patterns" value="baseline and differential"/>
</dbReference>
<dbReference type="GO" id="GO:0005634">
    <property type="term" value="C:nucleus"/>
    <property type="evidence" value="ECO:0000318"/>
    <property type="project" value="GO_Central"/>
</dbReference>
<dbReference type="GO" id="GO:0008270">
    <property type="term" value="F:zinc ion binding"/>
    <property type="evidence" value="ECO:0007669"/>
    <property type="project" value="UniProtKB-KW"/>
</dbReference>
<dbReference type="GO" id="GO:0006357">
    <property type="term" value="P:regulation of transcription by RNA polymerase II"/>
    <property type="evidence" value="ECO:0000318"/>
    <property type="project" value="GO_Central"/>
</dbReference>
<dbReference type="FunFam" id="3.30.160.60:FF:000688">
    <property type="entry name" value="zinc finger protein 197 isoform X1"/>
    <property type="match status" value="1"/>
</dbReference>
<dbReference type="FunFam" id="3.30.160.60:FF:000016">
    <property type="entry name" value="zinc finger protein 37 homolog"/>
    <property type="match status" value="2"/>
</dbReference>
<dbReference type="FunFam" id="3.30.160.60:FF:002090">
    <property type="entry name" value="Zinc finger protein 473"/>
    <property type="match status" value="1"/>
</dbReference>
<dbReference type="FunFam" id="3.30.160.60:FF:002254">
    <property type="entry name" value="Zinc finger protein 540"/>
    <property type="match status" value="1"/>
</dbReference>
<dbReference type="FunFam" id="3.30.160.60:FF:002134">
    <property type="entry name" value="Zinc finger protein 616"/>
    <property type="match status" value="1"/>
</dbReference>
<dbReference type="FunFam" id="3.30.160.60:FF:000017">
    <property type="entry name" value="zinc finger protein 62 homolog"/>
    <property type="match status" value="12"/>
</dbReference>
<dbReference type="FunFam" id="3.30.160.60:FF:002105">
    <property type="entry name" value="zinc finger protein 62 homolog"/>
    <property type="match status" value="1"/>
</dbReference>
<dbReference type="FunFam" id="3.30.160.60:FF:001232">
    <property type="entry name" value="zinc finger protein 62 homolog isoform X1"/>
    <property type="match status" value="1"/>
</dbReference>
<dbReference type="FunFam" id="3.30.160.60:FF:000248">
    <property type="entry name" value="zinc finger protein 62 homolog isoform X2"/>
    <property type="match status" value="5"/>
</dbReference>
<dbReference type="FunFam" id="3.30.160.60:FF:001949">
    <property type="entry name" value="zinc finger protein 62 homolog isoform X2"/>
    <property type="match status" value="1"/>
</dbReference>
<dbReference type="Gene3D" id="3.30.160.60">
    <property type="entry name" value="Classic Zinc Finger"/>
    <property type="match status" value="26"/>
</dbReference>
<dbReference type="InterPro" id="IPR050636">
    <property type="entry name" value="C2H2-ZF_domain-containing"/>
</dbReference>
<dbReference type="InterPro" id="IPR036236">
    <property type="entry name" value="Znf_C2H2_sf"/>
</dbReference>
<dbReference type="InterPro" id="IPR013087">
    <property type="entry name" value="Znf_C2H2_type"/>
</dbReference>
<dbReference type="PANTHER" id="PTHR47772:SF15">
    <property type="entry name" value="REDUCED EXPRESSION 2-RELATED"/>
    <property type="match status" value="1"/>
</dbReference>
<dbReference type="PANTHER" id="PTHR47772">
    <property type="entry name" value="ZINC FINGER PROTEIN 200"/>
    <property type="match status" value="1"/>
</dbReference>
<dbReference type="Pfam" id="PF00096">
    <property type="entry name" value="zf-C2H2"/>
    <property type="match status" value="23"/>
</dbReference>
<dbReference type="Pfam" id="PF13912">
    <property type="entry name" value="zf-C2H2_6"/>
    <property type="match status" value="2"/>
</dbReference>
<dbReference type="SMART" id="SM00355">
    <property type="entry name" value="ZnF_C2H2"/>
    <property type="match status" value="26"/>
</dbReference>
<dbReference type="SUPFAM" id="SSF57667">
    <property type="entry name" value="beta-beta-alpha zinc fingers"/>
    <property type="match status" value="16"/>
</dbReference>
<dbReference type="PROSITE" id="PS00028">
    <property type="entry name" value="ZINC_FINGER_C2H2_1"/>
    <property type="match status" value="25"/>
</dbReference>
<dbReference type="PROSITE" id="PS50157">
    <property type="entry name" value="ZINC_FINGER_C2H2_2"/>
    <property type="match status" value="26"/>
</dbReference>
<keyword id="KW-0025">Alternative splicing</keyword>
<keyword id="KW-1017">Isopeptide bond</keyword>
<keyword id="KW-0479">Metal-binding</keyword>
<keyword id="KW-0539">Nucleus</keyword>
<keyword id="KW-1267">Proteomics identification</keyword>
<keyword id="KW-1185">Reference proteome</keyword>
<keyword id="KW-0677">Repeat</keyword>
<keyword id="KW-0804">Transcription</keyword>
<keyword id="KW-0805">Transcription regulation</keyword>
<keyword id="KW-0832">Ubl conjugation</keyword>
<keyword id="KW-0862">Zinc</keyword>
<keyword id="KW-0863">Zinc-finger</keyword>
<feature type="chain" id="PRO_0000047305" description="Zinc finger protein 62 homolog">
    <location>
        <begin position="1"/>
        <end position="900"/>
    </location>
</feature>
<feature type="zinc finger region" description="C2H2-type 1" evidence="2">
    <location>
        <begin position="225"/>
        <end position="247"/>
    </location>
</feature>
<feature type="zinc finger region" description="C2H2-type 2" evidence="2">
    <location>
        <begin position="253"/>
        <end position="275"/>
    </location>
</feature>
<feature type="zinc finger region" description="C2H2-type 3" evidence="2">
    <location>
        <begin position="281"/>
        <end position="303"/>
    </location>
</feature>
<feature type="zinc finger region" description="C2H2-type 4" evidence="2">
    <location>
        <begin position="309"/>
        <end position="331"/>
    </location>
</feature>
<feature type="zinc finger region" description="C2H2-type 5" evidence="2">
    <location>
        <begin position="337"/>
        <end position="359"/>
    </location>
</feature>
<feature type="zinc finger region" description="C2H2-type 6" evidence="2">
    <location>
        <begin position="365"/>
        <end position="387"/>
    </location>
</feature>
<feature type="zinc finger region" description="C2H2-type 7" evidence="2">
    <location>
        <begin position="393"/>
        <end position="415"/>
    </location>
</feature>
<feature type="zinc finger region" description="C2H2-type 8" evidence="2">
    <location>
        <begin position="421"/>
        <end position="443"/>
    </location>
</feature>
<feature type="zinc finger region" description="C2H2-type 9" evidence="2">
    <location>
        <begin position="449"/>
        <end position="471"/>
    </location>
</feature>
<feature type="zinc finger region" description="C2H2-type 10" evidence="2">
    <location>
        <begin position="477"/>
        <end position="499"/>
    </location>
</feature>
<feature type="zinc finger region" description="C2H2-type 11" evidence="2">
    <location>
        <begin position="505"/>
        <end position="527"/>
    </location>
</feature>
<feature type="zinc finger region" description="C2H2-type 12" evidence="2">
    <location>
        <begin position="533"/>
        <end position="555"/>
    </location>
</feature>
<feature type="zinc finger region" description="C2H2-type 13" evidence="2">
    <location>
        <begin position="561"/>
        <end position="583"/>
    </location>
</feature>
<feature type="zinc finger region" description="C2H2-type 14" evidence="2">
    <location>
        <begin position="589"/>
        <end position="611"/>
    </location>
</feature>
<feature type="zinc finger region" description="C2H2-type 15" evidence="2">
    <location>
        <begin position="617"/>
        <end position="639"/>
    </location>
</feature>
<feature type="zinc finger region" description="C2H2-type 16" evidence="2">
    <location>
        <begin position="645"/>
        <end position="667"/>
    </location>
</feature>
<feature type="zinc finger region" description="C2H2-type 17" evidence="2">
    <location>
        <begin position="673"/>
        <end position="695"/>
    </location>
</feature>
<feature type="zinc finger region" description="C2H2-type 18" evidence="2">
    <location>
        <begin position="701"/>
        <end position="723"/>
    </location>
</feature>
<feature type="zinc finger region" description="C2H2-type 19" evidence="2">
    <location>
        <begin position="729"/>
        <end position="751"/>
    </location>
</feature>
<feature type="zinc finger region" description="C2H2-type 20" evidence="2">
    <location>
        <begin position="757"/>
        <end position="779"/>
    </location>
</feature>
<feature type="zinc finger region" description="C2H2-type 21" evidence="2">
    <location>
        <begin position="785"/>
        <end position="807"/>
    </location>
</feature>
<feature type="zinc finger region" description="C2H2-type 22" evidence="2">
    <location>
        <begin position="813"/>
        <end position="834"/>
    </location>
</feature>
<feature type="zinc finger region" description="C2H2-type 23" evidence="2">
    <location>
        <begin position="840"/>
        <end position="862"/>
    </location>
</feature>
<feature type="region of interest" description="Disordered" evidence="3">
    <location>
        <begin position="1"/>
        <end position="97"/>
    </location>
</feature>
<feature type="compositionally biased region" description="Acidic residues" evidence="3">
    <location>
        <begin position="9"/>
        <end position="18"/>
    </location>
</feature>
<feature type="compositionally biased region" description="Basic and acidic residues" evidence="3">
    <location>
        <begin position="47"/>
        <end position="73"/>
    </location>
</feature>
<feature type="compositionally biased region" description="Basic and acidic residues" evidence="3">
    <location>
        <begin position="83"/>
        <end position="94"/>
    </location>
</feature>
<feature type="cross-link" description="Glycyl lysine isopeptide (Lys-Gly) (interchain with G-Cter in SUMO2)" evidence="12">
    <location>
        <position position="5"/>
    </location>
</feature>
<feature type="cross-link" description="Glycyl lysine isopeptide (Lys-Gly) (interchain with G-Cter in SUMO2)" evidence="12">
    <location>
        <position position="48"/>
    </location>
</feature>
<feature type="cross-link" description="Glycyl lysine isopeptide (Lys-Gly) (interchain with G-Cter in SUMO2)" evidence="12">
    <location>
        <position position="62"/>
    </location>
</feature>
<feature type="cross-link" description="Glycyl lysine isopeptide (Lys-Gly) (interchain with G-Cter in SUMO2)" evidence="9 12">
    <location>
        <position position="65"/>
    </location>
</feature>
<feature type="cross-link" description="Glycyl lysine isopeptide (Lys-Gly) (interchain with G-Cter in SUMO2)" evidence="9 10 11 12">
    <location>
        <position position="82"/>
    </location>
</feature>
<feature type="cross-link" description="Glycyl lysine isopeptide (Lys-Gly) (interchain with G-Cter in SUMO2)" evidence="12">
    <location>
        <position position="92"/>
    </location>
</feature>
<feature type="cross-link" description="Glycyl lysine isopeptide (Lys-Gly) (interchain with G-Cter in SUMO2)" evidence="12">
    <location>
        <position position="587"/>
    </location>
</feature>
<feature type="cross-link" description="Glycyl lysine isopeptide (Lys-Gly) (interchain with G-Cter in SUMO2)" evidence="12">
    <location>
        <position position="748"/>
    </location>
</feature>
<feature type="cross-link" description="Glycyl lysine isopeptide (Lys-Gly) (interchain with G-Cter in SUMO2)" evidence="12">
    <location>
        <position position="882"/>
    </location>
</feature>
<feature type="splice variant" id="VSP_045257" description="In isoform 3." evidence="7">
    <location>
        <begin position="1"/>
        <end position="33"/>
    </location>
</feature>
<feature type="splice variant" id="VSP_010136" description="In isoform 2." evidence="7">
    <location>
        <begin position="339"/>
        <end position="534"/>
    </location>
</feature>
<feature type="sequence variant" id="VAR_064881" description="In dbSNP:rs705441." evidence="4">
    <original>M</original>
    <variation>I</variation>
    <location>
        <position position="34"/>
    </location>
</feature>
<feature type="sequence variant" id="VAR_064882" description="In dbSNP:rs168726." evidence="4 5 6">
    <original>R</original>
    <variation>K</variation>
    <location>
        <position position="698"/>
    </location>
</feature>
<feature type="sequence conflict" description="In Ref. 1; BAC03691." evidence="8" ref="1">
    <original>C</original>
    <variation>R</variation>
    <location>
        <position position="321"/>
    </location>
</feature>
<feature type="sequence conflict" description="In Ref. 1; BAG64495." evidence="8" ref="1">
    <original>N</original>
    <variation>I</variation>
    <location>
        <position position="690"/>
    </location>
</feature>
<feature type="sequence conflict" description="In Ref. 1; BAG58558." evidence="8" ref="1">
    <original>L</original>
    <variation>F</variation>
    <location>
        <position position="800"/>
    </location>
</feature>
<gene>
    <name type="primary">ZFP62</name>
</gene>
<sequence length="900" mass="102511">MSHLKTSTEDEEPTEEYENVGNAASKWPKVEDPMPESKVGDTCVWDSKVENQQKKPVENRMKEDKSSIREAISKAKSTANIKTEQEGEASEKSLHLSPQHITHQTMPIGQRGSEQGKRVENINGTSYPSLQQKTNAVKKLHKCDECGKSFKYNSRLVQHKIMHTGEKRYECDDCGGTFRSSSSLRVHKRIHTGEKPYKCEECGKAYMSYSSLINHKSTHSGEKNCKCDECGKSFNYSSVLDQHKRIHTGEKPYECGECGKAFRNSSGLRVHKRIHTGEKPYECDICGKTFSNSSGLRVHKRIHTGEKPYECDECGKAFITCRTLLNHKSIHFGDKPYKCDECEKSFNYSSLLIQHKVIHTGEKPYECDECGKAFRNSSGLIVHKRIHTGEKPYKCDVCGKAFSYSSGLAVHKSIHPGKKAHECKECGKSFSYNSLLLQHRTIHTGERPYVCDVCGKTFRNNAGLKVHRRLHTGEKPYKCDVCGKAYISRSSLKNHKGIHLGEKPYKCSYCEKSFNYSSALEQHKRIHTREKPFGCDECGKAFRNNSGLKVHKRIHTGERPYKCEECGKAYISLSSLINHKSVHPGEKPFKCDECEKAFITYRTLTNHKKVHLGEKPYKCDVCEKSFNYTSLLSQHRRVHTREKPYECDRCEKVFRNNSSLKVHKRIHTGERPYECDVCGKAYISHSSLINHKSTHPGRTPHTCDECGKAFFSSRTLISHKRVHLGEKPFKCVECGKSFSYSSLLSQHKRIHTGEKPYVCDRCGKAFRNSSGLTVHKRIHTGEKPYECDECGKAYISHSSLINHKSVHQGKQPYNCECGKSFNYRSVLDQHKRIHTGKKPYRCNECGKAFNIRSNLTKHKRTHTGEESLNVIYVGSYSGTSQKRTYEGGNALDGGRMRMPL</sequence>
<accession>Q8NB50</accession>
<accession>B4DIP6</accession>
<accession>B4E0N3</accession>
<accession>B5MDX6</accession>
<accession>B7ZVZ2</accession>
<accession>B9EIP6</accession>
<accession>E9PFT8</accession>
<accession>J3QTA9</accession>
<protein>
    <recommendedName>
        <fullName>Zinc finger protein 62 homolog</fullName>
        <shortName>Zfp-62</shortName>
    </recommendedName>
</protein>
<comment type="function">
    <text evidence="1">May play a role in differentiating skeletal muscle.</text>
</comment>
<comment type="subcellular location">
    <subcellularLocation>
        <location evidence="8">Nucleus</location>
    </subcellularLocation>
</comment>
<comment type="alternative products">
    <event type="alternative splicing"/>
    <isoform>
        <id>Q8NB50-1</id>
        <name>1</name>
        <sequence type="displayed"/>
    </isoform>
    <isoform>
        <id>Q8NB50-2</id>
        <name>2</name>
        <sequence type="described" ref="VSP_010136"/>
    </isoform>
    <isoform>
        <id>Q8NB50-3</id>
        <name>3</name>
        <sequence type="described" ref="VSP_045257"/>
    </isoform>
</comment>
<comment type="similarity">
    <text evidence="8">Belongs to the krueppel C2H2-type zinc-finger protein family.</text>
</comment>
<comment type="sequence caution" evidence="8">
    <conflict type="erroneous initiation">
        <sequence resource="EMBL-CDS" id="AAI40762"/>
    </conflict>
    <text>Truncated N-terminus.</text>
</comment>
<comment type="sequence caution" evidence="8">
    <conflict type="erroneous initiation">
        <sequence resource="EMBL-CDS" id="BAC03691"/>
    </conflict>
    <text>Truncated N-terminus.</text>
</comment>
<comment type="sequence caution" evidence="8">
    <conflict type="miscellaneous discrepancy">
        <sequence resource="EMBL-CDS" id="BAG58558"/>
    </conflict>
    <text>Unusual initiator. The initiator methionine is coded by a non-canonical GTG valine codon.</text>
</comment>
<comment type="sequence caution" evidence="8">
    <conflict type="erroneous initiation">
        <sequence resource="EMBL-CDS" id="CAI46133"/>
    </conflict>
    <text>Truncated N-terminus.</text>
</comment>
<organism>
    <name type="scientific">Homo sapiens</name>
    <name type="common">Human</name>
    <dbReference type="NCBI Taxonomy" id="9606"/>
    <lineage>
        <taxon>Eukaryota</taxon>
        <taxon>Metazoa</taxon>
        <taxon>Chordata</taxon>
        <taxon>Craniata</taxon>
        <taxon>Vertebrata</taxon>
        <taxon>Euteleostomi</taxon>
        <taxon>Mammalia</taxon>
        <taxon>Eutheria</taxon>
        <taxon>Euarchontoglires</taxon>
        <taxon>Primates</taxon>
        <taxon>Haplorrhini</taxon>
        <taxon>Catarrhini</taxon>
        <taxon>Hominidae</taxon>
        <taxon>Homo</taxon>
    </lineage>
</organism>
<evidence type="ECO:0000250" key="1"/>
<evidence type="ECO:0000255" key="2">
    <source>
        <dbReference type="PROSITE-ProRule" id="PRU00042"/>
    </source>
</evidence>
<evidence type="ECO:0000256" key="3">
    <source>
        <dbReference type="SAM" id="MobiDB-lite"/>
    </source>
</evidence>
<evidence type="ECO:0000269" key="4">
    <source>
    </source>
</evidence>
<evidence type="ECO:0000269" key="5">
    <source>
    </source>
</evidence>
<evidence type="ECO:0000269" key="6">
    <source>
    </source>
</evidence>
<evidence type="ECO:0000303" key="7">
    <source>
    </source>
</evidence>
<evidence type="ECO:0000305" key="8"/>
<evidence type="ECO:0007744" key="9">
    <source>
    </source>
</evidence>
<evidence type="ECO:0007744" key="10">
    <source>
    </source>
</evidence>
<evidence type="ECO:0007744" key="11">
    <source>
    </source>
</evidence>
<evidence type="ECO:0007744" key="12">
    <source>
    </source>
</evidence>
<reference key="1">
    <citation type="journal article" date="2004" name="Nat. Genet.">
        <title>Complete sequencing and characterization of 21,243 full-length human cDNAs.</title>
        <authorList>
            <person name="Ota T."/>
            <person name="Suzuki Y."/>
            <person name="Nishikawa T."/>
            <person name="Otsuki T."/>
            <person name="Sugiyama T."/>
            <person name="Irie R."/>
            <person name="Wakamatsu A."/>
            <person name="Hayashi K."/>
            <person name="Sato H."/>
            <person name="Nagai K."/>
            <person name="Kimura K."/>
            <person name="Makita H."/>
            <person name="Sekine M."/>
            <person name="Obayashi M."/>
            <person name="Nishi T."/>
            <person name="Shibahara T."/>
            <person name="Tanaka T."/>
            <person name="Ishii S."/>
            <person name="Yamamoto J."/>
            <person name="Saito K."/>
            <person name="Kawai Y."/>
            <person name="Isono Y."/>
            <person name="Nakamura Y."/>
            <person name="Nagahari K."/>
            <person name="Murakami K."/>
            <person name="Yasuda T."/>
            <person name="Iwayanagi T."/>
            <person name="Wagatsuma M."/>
            <person name="Shiratori A."/>
            <person name="Sudo H."/>
            <person name="Hosoiri T."/>
            <person name="Kaku Y."/>
            <person name="Kodaira H."/>
            <person name="Kondo H."/>
            <person name="Sugawara M."/>
            <person name="Takahashi M."/>
            <person name="Kanda K."/>
            <person name="Yokoi T."/>
            <person name="Furuya T."/>
            <person name="Kikkawa E."/>
            <person name="Omura Y."/>
            <person name="Abe K."/>
            <person name="Kamihara K."/>
            <person name="Katsuta N."/>
            <person name="Sato K."/>
            <person name="Tanikawa M."/>
            <person name="Yamazaki M."/>
            <person name="Ninomiya K."/>
            <person name="Ishibashi T."/>
            <person name="Yamashita H."/>
            <person name="Murakawa K."/>
            <person name="Fujimori K."/>
            <person name="Tanai H."/>
            <person name="Kimata M."/>
            <person name="Watanabe M."/>
            <person name="Hiraoka S."/>
            <person name="Chiba Y."/>
            <person name="Ishida S."/>
            <person name="Ono Y."/>
            <person name="Takiguchi S."/>
            <person name="Watanabe S."/>
            <person name="Yosida M."/>
            <person name="Hotuta T."/>
            <person name="Kusano J."/>
            <person name="Kanehori K."/>
            <person name="Takahashi-Fujii A."/>
            <person name="Hara H."/>
            <person name="Tanase T.-O."/>
            <person name="Nomura Y."/>
            <person name="Togiya S."/>
            <person name="Komai F."/>
            <person name="Hara R."/>
            <person name="Takeuchi K."/>
            <person name="Arita M."/>
            <person name="Imose N."/>
            <person name="Musashino K."/>
            <person name="Yuuki H."/>
            <person name="Oshima A."/>
            <person name="Sasaki N."/>
            <person name="Aotsuka S."/>
            <person name="Yoshikawa Y."/>
            <person name="Matsunawa H."/>
            <person name="Ichihara T."/>
            <person name="Shiohata N."/>
            <person name="Sano S."/>
            <person name="Moriya S."/>
            <person name="Momiyama H."/>
            <person name="Satoh N."/>
            <person name="Takami S."/>
            <person name="Terashima Y."/>
            <person name="Suzuki O."/>
            <person name="Nakagawa S."/>
            <person name="Senoh A."/>
            <person name="Mizoguchi H."/>
            <person name="Goto Y."/>
            <person name="Shimizu F."/>
            <person name="Wakebe H."/>
            <person name="Hishigaki H."/>
            <person name="Watanabe T."/>
            <person name="Sugiyama A."/>
            <person name="Takemoto M."/>
            <person name="Kawakami B."/>
            <person name="Yamazaki M."/>
            <person name="Watanabe K."/>
            <person name="Kumagai A."/>
            <person name="Itakura S."/>
            <person name="Fukuzumi Y."/>
            <person name="Fujimori Y."/>
            <person name="Komiyama M."/>
            <person name="Tashiro H."/>
            <person name="Tanigami A."/>
            <person name="Fujiwara T."/>
            <person name="Ono T."/>
            <person name="Yamada K."/>
            <person name="Fujii Y."/>
            <person name="Ozaki K."/>
            <person name="Hirao M."/>
            <person name="Ohmori Y."/>
            <person name="Kawabata A."/>
            <person name="Hikiji T."/>
            <person name="Kobatake N."/>
            <person name="Inagaki H."/>
            <person name="Ikema Y."/>
            <person name="Okamoto S."/>
            <person name="Okitani R."/>
            <person name="Kawakami T."/>
            <person name="Noguchi S."/>
            <person name="Itoh T."/>
            <person name="Shigeta K."/>
            <person name="Senba T."/>
            <person name="Matsumura K."/>
            <person name="Nakajima Y."/>
            <person name="Mizuno T."/>
            <person name="Morinaga M."/>
            <person name="Sasaki M."/>
            <person name="Togashi T."/>
            <person name="Oyama M."/>
            <person name="Hata H."/>
            <person name="Watanabe M."/>
            <person name="Komatsu T."/>
            <person name="Mizushima-Sugano J."/>
            <person name="Satoh T."/>
            <person name="Shirai Y."/>
            <person name="Takahashi Y."/>
            <person name="Nakagawa K."/>
            <person name="Okumura K."/>
            <person name="Nagase T."/>
            <person name="Nomura N."/>
            <person name="Kikuchi H."/>
            <person name="Masuho Y."/>
            <person name="Yamashita R."/>
            <person name="Nakai K."/>
            <person name="Yada T."/>
            <person name="Nakamura Y."/>
            <person name="Ohara O."/>
            <person name="Isogai T."/>
            <person name="Sugano S."/>
        </authorList>
    </citation>
    <scope>NUCLEOTIDE SEQUENCE [LARGE SCALE MRNA] (ISOFORM 1)</scope>
    <scope>NUCLEOTIDE SEQUENCE [LARGE SCALE MRNA] OF 173-900 (ISOFORM 2)</scope>
    <scope>NUCLEOTIDE SEQUENCE [LARGE SCALE MRNA] OF 1-145 (ISOFORM 3)</scope>
    <scope>VARIANTS ILE-34 AND LYS-698</scope>
    <source>
        <tissue>Brain</tissue>
        <tissue>Hippocampus</tissue>
        <tissue>Thymus</tissue>
    </source>
</reference>
<reference key="2">
    <citation type="journal article" date="2004" name="Nature">
        <title>The DNA sequence and comparative analysis of human chromosome 5.</title>
        <authorList>
            <person name="Schmutz J."/>
            <person name="Martin J."/>
            <person name="Terry A."/>
            <person name="Couronne O."/>
            <person name="Grimwood J."/>
            <person name="Lowry S."/>
            <person name="Gordon L.A."/>
            <person name="Scott D."/>
            <person name="Xie G."/>
            <person name="Huang W."/>
            <person name="Hellsten U."/>
            <person name="Tran-Gyamfi M."/>
            <person name="She X."/>
            <person name="Prabhakar S."/>
            <person name="Aerts A."/>
            <person name="Altherr M."/>
            <person name="Bajorek E."/>
            <person name="Black S."/>
            <person name="Branscomb E."/>
            <person name="Caoile C."/>
            <person name="Challacombe J.F."/>
            <person name="Chan Y.M."/>
            <person name="Denys M."/>
            <person name="Detter J.C."/>
            <person name="Escobar J."/>
            <person name="Flowers D."/>
            <person name="Fotopulos D."/>
            <person name="Glavina T."/>
            <person name="Gomez M."/>
            <person name="Gonzales E."/>
            <person name="Goodstein D."/>
            <person name="Grigoriev I."/>
            <person name="Groza M."/>
            <person name="Hammon N."/>
            <person name="Hawkins T."/>
            <person name="Haydu L."/>
            <person name="Israni S."/>
            <person name="Jett J."/>
            <person name="Kadner K."/>
            <person name="Kimball H."/>
            <person name="Kobayashi A."/>
            <person name="Lopez F."/>
            <person name="Lou Y."/>
            <person name="Martinez D."/>
            <person name="Medina C."/>
            <person name="Morgan J."/>
            <person name="Nandkeshwar R."/>
            <person name="Noonan J.P."/>
            <person name="Pitluck S."/>
            <person name="Pollard M."/>
            <person name="Predki P."/>
            <person name="Priest J."/>
            <person name="Ramirez L."/>
            <person name="Retterer J."/>
            <person name="Rodriguez A."/>
            <person name="Rogers S."/>
            <person name="Salamov A."/>
            <person name="Salazar A."/>
            <person name="Thayer N."/>
            <person name="Tice H."/>
            <person name="Tsai M."/>
            <person name="Ustaszewska A."/>
            <person name="Vo N."/>
            <person name="Wheeler J."/>
            <person name="Wu K."/>
            <person name="Yang J."/>
            <person name="Dickson M."/>
            <person name="Cheng J.-F."/>
            <person name="Eichler E.E."/>
            <person name="Olsen A."/>
            <person name="Pennacchio L.A."/>
            <person name="Rokhsar D.S."/>
            <person name="Richardson P."/>
            <person name="Lucas S.M."/>
            <person name="Myers R.M."/>
            <person name="Rubin E.M."/>
        </authorList>
    </citation>
    <scope>NUCLEOTIDE SEQUENCE [LARGE SCALE GENOMIC DNA]</scope>
</reference>
<reference key="3">
    <citation type="journal article" date="2007" name="BMC Genomics">
        <title>The full-ORF clone resource of the German cDNA consortium.</title>
        <authorList>
            <person name="Bechtel S."/>
            <person name="Rosenfelder H."/>
            <person name="Duda A."/>
            <person name="Schmidt C.P."/>
            <person name="Ernst U."/>
            <person name="Wellenreuther R."/>
            <person name="Mehrle A."/>
            <person name="Schuster C."/>
            <person name="Bahr A."/>
            <person name="Bloecker H."/>
            <person name="Heubner D."/>
            <person name="Hoerlein A."/>
            <person name="Michel G."/>
            <person name="Wedler H."/>
            <person name="Koehrer K."/>
            <person name="Ottenwaelder B."/>
            <person name="Poustka A."/>
            <person name="Wiemann S."/>
            <person name="Schupp I."/>
        </authorList>
    </citation>
    <scope>NUCLEOTIDE SEQUENCE [LARGE SCALE MRNA] OF 186-900 (ISOFORM 1)</scope>
    <scope>VARIANT LYS-698</scope>
    <source>
        <tissue>Lymph node</tissue>
    </source>
</reference>
<reference key="4">
    <citation type="journal article" date="2004" name="Genome Res.">
        <title>The status, quality, and expansion of the NIH full-length cDNA project: the Mammalian Gene Collection (MGC).</title>
        <authorList>
            <consortium name="The MGC Project Team"/>
        </authorList>
    </citation>
    <scope>NUCLEOTIDE SEQUENCE [LARGE SCALE MRNA] OF 186-900 (ISOFORM 1)</scope>
    <scope>VARIANT LYS-698</scope>
    <source>
        <tissue>Lung</tissue>
    </source>
</reference>
<reference key="5">
    <citation type="journal article" date="2014" name="Nat. Struct. Mol. Biol.">
        <title>Uncovering global SUMOylation signaling networks in a site-specific manner.</title>
        <authorList>
            <person name="Hendriks I.A."/>
            <person name="D'Souza R.C."/>
            <person name="Yang B."/>
            <person name="Verlaan-de Vries M."/>
            <person name="Mann M."/>
            <person name="Vertegaal A.C."/>
        </authorList>
    </citation>
    <scope>SUMOYLATION [LARGE SCALE ANALYSIS] AT LYS-65 AND LYS-82</scope>
    <scope>IDENTIFICATION BY MASS SPECTROMETRY [LARGE SCALE ANALYSIS]</scope>
</reference>
<reference key="6">
    <citation type="journal article" date="2015" name="Cell Rep.">
        <title>SUMO-2 orchestrates chromatin modifiers in response to DNA damage.</title>
        <authorList>
            <person name="Hendriks I.A."/>
            <person name="Treffers L.W."/>
            <person name="Verlaan-de Vries M."/>
            <person name="Olsen J.V."/>
            <person name="Vertegaal A.C."/>
        </authorList>
    </citation>
    <scope>SUMOYLATION [LARGE SCALE ANALYSIS] AT LYS-82</scope>
    <scope>IDENTIFICATION BY MASS SPECTROMETRY [LARGE SCALE ANALYSIS]</scope>
</reference>
<reference key="7">
    <citation type="journal article" date="2015" name="Mol. Cell. Proteomics">
        <title>System-wide analysis of SUMOylation dynamics in response to replication stress reveals novel small ubiquitin-like modified target proteins and acceptor lysines relevant for genome stability.</title>
        <authorList>
            <person name="Xiao Z."/>
            <person name="Chang J.G."/>
            <person name="Hendriks I.A."/>
            <person name="Sigurdsson J.O."/>
            <person name="Olsen J.V."/>
            <person name="Vertegaal A.C."/>
        </authorList>
    </citation>
    <scope>SUMOYLATION [LARGE SCALE ANALYSIS] AT LYS-82</scope>
    <scope>IDENTIFICATION BY MASS SPECTROMETRY [LARGE SCALE ANALYSIS]</scope>
</reference>
<reference key="8">
    <citation type="journal article" date="2017" name="Nat. Struct. Mol. Biol.">
        <title>Site-specific mapping of the human SUMO proteome reveals co-modification with phosphorylation.</title>
        <authorList>
            <person name="Hendriks I.A."/>
            <person name="Lyon D."/>
            <person name="Young C."/>
            <person name="Jensen L.J."/>
            <person name="Vertegaal A.C."/>
            <person name="Nielsen M.L."/>
        </authorList>
    </citation>
    <scope>SUMOYLATION [LARGE SCALE ANALYSIS] AT LYS-5; LYS-48; LYS-62; LYS-65; LYS-82; LYS-92; LYS-587; LYS-748 AND LYS-882</scope>
    <scope>IDENTIFICATION BY MASS SPECTROMETRY [LARGE SCALE ANALYSIS]</scope>
</reference>